<reference key="1">
    <citation type="submission" date="2009-03" db="EMBL/GenBank/DDBJ databases">
        <title>Brucella melitensis ATCC 23457 whole genome shotgun sequencing project.</title>
        <authorList>
            <person name="Setubal J.C."/>
            <person name="Boyle S."/>
            <person name="Crasta O.R."/>
            <person name="Gillespie J.J."/>
            <person name="Kenyon R.W."/>
            <person name="Lu J."/>
            <person name="Mane S."/>
            <person name="Nagrani S."/>
            <person name="Shallom J.M."/>
            <person name="Shallom S."/>
            <person name="Shukla M."/>
            <person name="Snyder E.E."/>
            <person name="Sobral B.W."/>
            <person name="Wattam A.R."/>
            <person name="Will R."/>
            <person name="Williams K."/>
            <person name="Yoo H."/>
            <person name="Munk C."/>
            <person name="Tapia R."/>
            <person name="Han C."/>
            <person name="Detter J.C."/>
            <person name="Bruce D."/>
            <person name="Brettin T.S."/>
        </authorList>
    </citation>
    <scope>NUCLEOTIDE SEQUENCE [LARGE SCALE GENOMIC DNA]</scope>
    <source>
        <strain>ATCC 23457</strain>
    </source>
</reference>
<sequence length="293" mass="32524">MQIIHTIEELRQALAPARQQGKKIGFVPTMGYLHKGHLELVRRARVENDVTLVSIFVNPLQFGANEDLGRYPRDLERDAGLLHDAQVDYLFAPTVSDMYPRPMQTVVDVPPLGNQMEGEARPGHFAGVATVVSKLFNIVGPDAAYFGEKDFQQLVIIRRMVDDMAIPVRIVGVETVREDDGLACSSRNVYLTPEQRRAAIIVPQALDEADRLYRSGMDDPDALEAAIRTFIGRQPLAVPEVIAIRDPETLERLPALQGRPILVALFVRVGATRLLDNRVIGHAAPQITQERAA</sequence>
<evidence type="ECO:0000255" key="1">
    <source>
        <dbReference type="HAMAP-Rule" id="MF_00158"/>
    </source>
</evidence>
<keyword id="KW-0067">ATP-binding</keyword>
<keyword id="KW-0963">Cytoplasm</keyword>
<keyword id="KW-0436">Ligase</keyword>
<keyword id="KW-0547">Nucleotide-binding</keyword>
<keyword id="KW-0566">Pantothenate biosynthesis</keyword>
<feature type="chain" id="PRO_1000123402" description="Pantothenate synthetase">
    <location>
        <begin position="1"/>
        <end position="293"/>
    </location>
</feature>
<feature type="active site" description="Proton donor" evidence="1">
    <location>
        <position position="37"/>
    </location>
</feature>
<feature type="binding site" evidence="1">
    <location>
        <begin position="30"/>
        <end position="37"/>
    </location>
    <ligand>
        <name>ATP</name>
        <dbReference type="ChEBI" id="CHEBI:30616"/>
    </ligand>
</feature>
<feature type="binding site" evidence="1">
    <location>
        <position position="61"/>
    </location>
    <ligand>
        <name>(R)-pantoate</name>
        <dbReference type="ChEBI" id="CHEBI:15980"/>
    </ligand>
</feature>
<feature type="binding site" evidence="1">
    <location>
        <position position="61"/>
    </location>
    <ligand>
        <name>beta-alanine</name>
        <dbReference type="ChEBI" id="CHEBI:57966"/>
    </ligand>
</feature>
<feature type="binding site" evidence="1">
    <location>
        <begin position="147"/>
        <end position="150"/>
    </location>
    <ligand>
        <name>ATP</name>
        <dbReference type="ChEBI" id="CHEBI:30616"/>
    </ligand>
</feature>
<feature type="binding site" evidence="1">
    <location>
        <position position="153"/>
    </location>
    <ligand>
        <name>(R)-pantoate</name>
        <dbReference type="ChEBI" id="CHEBI:15980"/>
    </ligand>
</feature>
<feature type="binding site" evidence="1">
    <location>
        <position position="176"/>
    </location>
    <ligand>
        <name>ATP</name>
        <dbReference type="ChEBI" id="CHEBI:30616"/>
    </ligand>
</feature>
<feature type="binding site" evidence="1">
    <location>
        <begin position="184"/>
        <end position="187"/>
    </location>
    <ligand>
        <name>ATP</name>
        <dbReference type="ChEBI" id="CHEBI:30616"/>
    </ligand>
</feature>
<organism>
    <name type="scientific">Brucella melitensis biotype 2 (strain ATCC 23457)</name>
    <dbReference type="NCBI Taxonomy" id="546272"/>
    <lineage>
        <taxon>Bacteria</taxon>
        <taxon>Pseudomonadati</taxon>
        <taxon>Pseudomonadota</taxon>
        <taxon>Alphaproteobacteria</taxon>
        <taxon>Hyphomicrobiales</taxon>
        <taxon>Brucellaceae</taxon>
        <taxon>Brucella/Ochrobactrum group</taxon>
        <taxon>Brucella</taxon>
    </lineage>
</organism>
<comment type="function">
    <text evidence="1">Catalyzes the condensation of pantoate with beta-alanine in an ATP-dependent reaction via a pantoyl-adenylate intermediate.</text>
</comment>
<comment type="catalytic activity">
    <reaction evidence="1">
        <text>(R)-pantoate + beta-alanine + ATP = (R)-pantothenate + AMP + diphosphate + H(+)</text>
        <dbReference type="Rhea" id="RHEA:10912"/>
        <dbReference type="ChEBI" id="CHEBI:15378"/>
        <dbReference type="ChEBI" id="CHEBI:15980"/>
        <dbReference type="ChEBI" id="CHEBI:29032"/>
        <dbReference type="ChEBI" id="CHEBI:30616"/>
        <dbReference type="ChEBI" id="CHEBI:33019"/>
        <dbReference type="ChEBI" id="CHEBI:57966"/>
        <dbReference type="ChEBI" id="CHEBI:456215"/>
        <dbReference type="EC" id="6.3.2.1"/>
    </reaction>
</comment>
<comment type="pathway">
    <text evidence="1">Cofactor biosynthesis; (R)-pantothenate biosynthesis; (R)-pantothenate from (R)-pantoate and beta-alanine: step 1/1.</text>
</comment>
<comment type="subunit">
    <text evidence="1">Homodimer.</text>
</comment>
<comment type="subcellular location">
    <subcellularLocation>
        <location evidence="1">Cytoplasm</location>
    </subcellularLocation>
</comment>
<comment type="miscellaneous">
    <text evidence="1">The reaction proceeds by a bi uni uni bi ping pong mechanism.</text>
</comment>
<comment type="similarity">
    <text evidence="1">Belongs to the pantothenate synthetase family.</text>
</comment>
<gene>
    <name evidence="1" type="primary">panC</name>
    <name type="ordered locus">BMEA_A0367</name>
</gene>
<accession>C0RH45</accession>
<name>PANC_BRUMB</name>
<protein>
    <recommendedName>
        <fullName evidence="1">Pantothenate synthetase</fullName>
        <shortName evidence="1">PS</shortName>
        <ecNumber evidence="1">6.3.2.1</ecNumber>
    </recommendedName>
    <alternativeName>
        <fullName evidence="1">Pantoate--beta-alanine ligase</fullName>
    </alternativeName>
    <alternativeName>
        <fullName evidence="1">Pantoate-activating enzyme</fullName>
    </alternativeName>
</protein>
<dbReference type="EC" id="6.3.2.1" evidence="1"/>
<dbReference type="EMBL" id="CP001488">
    <property type="protein sequence ID" value="ACO00153.1"/>
    <property type="molecule type" value="Genomic_DNA"/>
</dbReference>
<dbReference type="RefSeq" id="WP_004682909.1">
    <property type="nucleotide sequence ID" value="NC_012441.1"/>
</dbReference>
<dbReference type="SMR" id="C0RH45"/>
<dbReference type="GeneID" id="97534282"/>
<dbReference type="KEGG" id="bmi:BMEA_A0367"/>
<dbReference type="HOGENOM" id="CLU_047148_0_0_5"/>
<dbReference type="UniPathway" id="UPA00028">
    <property type="reaction ID" value="UER00005"/>
</dbReference>
<dbReference type="Proteomes" id="UP000001748">
    <property type="component" value="Chromosome I"/>
</dbReference>
<dbReference type="GO" id="GO:0005829">
    <property type="term" value="C:cytosol"/>
    <property type="evidence" value="ECO:0007669"/>
    <property type="project" value="TreeGrafter"/>
</dbReference>
<dbReference type="GO" id="GO:0005524">
    <property type="term" value="F:ATP binding"/>
    <property type="evidence" value="ECO:0007669"/>
    <property type="project" value="UniProtKB-KW"/>
</dbReference>
<dbReference type="GO" id="GO:0004592">
    <property type="term" value="F:pantoate-beta-alanine ligase activity"/>
    <property type="evidence" value="ECO:0007669"/>
    <property type="project" value="UniProtKB-UniRule"/>
</dbReference>
<dbReference type="GO" id="GO:0015940">
    <property type="term" value="P:pantothenate biosynthetic process"/>
    <property type="evidence" value="ECO:0007669"/>
    <property type="project" value="UniProtKB-UniRule"/>
</dbReference>
<dbReference type="CDD" id="cd00560">
    <property type="entry name" value="PanC"/>
    <property type="match status" value="1"/>
</dbReference>
<dbReference type="FunFam" id="3.40.50.620:FF:000013">
    <property type="entry name" value="Pantothenate synthetase"/>
    <property type="match status" value="1"/>
</dbReference>
<dbReference type="Gene3D" id="3.40.50.620">
    <property type="entry name" value="HUPs"/>
    <property type="match status" value="1"/>
</dbReference>
<dbReference type="Gene3D" id="3.30.1300.10">
    <property type="entry name" value="Pantoate-beta-alanine ligase, C-terminal domain"/>
    <property type="match status" value="1"/>
</dbReference>
<dbReference type="HAMAP" id="MF_00158">
    <property type="entry name" value="PanC"/>
    <property type="match status" value="1"/>
</dbReference>
<dbReference type="InterPro" id="IPR004821">
    <property type="entry name" value="Cyt_trans-like"/>
</dbReference>
<dbReference type="InterPro" id="IPR003721">
    <property type="entry name" value="Pantoate_ligase"/>
</dbReference>
<dbReference type="InterPro" id="IPR042176">
    <property type="entry name" value="Pantoate_ligase_C"/>
</dbReference>
<dbReference type="InterPro" id="IPR014729">
    <property type="entry name" value="Rossmann-like_a/b/a_fold"/>
</dbReference>
<dbReference type="NCBIfam" id="TIGR00125">
    <property type="entry name" value="cyt_tran_rel"/>
    <property type="match status" value="1"/>
</dbReference>
<dbReference type="NCBIfam" id="TIGR00018">
    <property type="entry name" value="panC"/>
    <property type="match status" value="1"/>
</dbReference>
<dbReference type="PANTHER" id="PTHR21299">
    <property type="entry name" value="CYTIDYLATE KINASE/PANTOATE-BETA-ALANINE LIGASE"/>
    <property type="match status" value="1"/>
</dbReference>
<dbReference type="PANTHER" id="PTHR21299:SF1">
    <property type="entry name" value="PANTOATE--BETA-ALANINE LIGASE"/>
    <property type="match status" value="1"/>
</dbReference>
<dbReference type="Pfam" id="PF02569">
    <property type="entry name" value="Pantoate_ligase"/>
    <property type="match status" value="1"/>
</dbReference>
<dbReference type="SUPFAM" id="SSF52374">
    <property type="entry name" value="Nucleotidylyl transferase"/>
    <property type="match status" value="1"/>
</dbReference>
<proteinExistence type="inferred from homology"/>